<accession>B8GC95</accession>
<dbReference type="EC" id="2.5.1.19" evidence="1"/>
<dbReference type="EMBL" id="CP001337">
    <property type="protein sequence ID" value="ACL23069.1"/>
    <property type="molecule type" value="Genomic_DNA"/>
</dbReference>
<dbReference type="RefSeq" id="WP_012615435.1">
    <property type="nucleotide sequence ID" value="NC_011831.1"/>
</dbReference>
<dbReference type="SMR" id="B8GC95"/>
<dbReference type="STRING" id="326427.Cagg_0117"/>
<dbReference type="KEGG" id="cag:Cagg_0117"/>
<dbReference type="eggNOG" id="COG0128">
    <property type="taxonomic scope" value="Bacteria"/>
</dbReference>
<dbReference type="HOGENOM" id="CLU_024321_0_1_0"/>
<dbReference type="OrthoDB" id="9809920at2"/>
<dbReference type="UniPathway" id="UPA00053">
    <property type="reaction ID" value="UER00089"/>
</dbReference>
<dbReference type="Proteomes" id="UP000002508">
    <property type="component" value="Chromosome"/>
</dbReference>
<dbReference type="GO" id="GO:0005737">
    <property type="term" value="C:cytoplasm"/>
    <property type="evidence" value="ECO:0007669"/>
    <property type="project" value="UniProtKB-SubCell"/>
</dbReference>
<dbReference type="GO" id="GO:0003866">
    <property type="term" value="F:3-phosphoshikimate 1-carboxyvinyltransferase activity"/>
    <property type="evidence" value="ECO:0007669"/>
    <property type="project" value="UniProtKB-UniRule"/>
</dbReference>
<dbReference type="GO" id="GO:0008652">
    <property type="term" value="P:amino acid biosynthetic process"/>
    <property type="evidence" value="ECO:0007669"/>
    <property type="project" value="UniProtKB-KW"/>
</dbReference>
<dbReference type="GO" id="GO:0009073">
    <property type="term" value="P:aromatic amino acid family biosynthetic process"/>
    <property type="evidence" value="ECO:0007669"/>
    <property type="project" value="UniProtKB-KW"/>
</dbReference>
<dbReference type="GO" id="GO:0009423">
    <property type="term" value="P:chorismate biosynthetic process"/>
    <property type="evidence" value="ECO:0007669"/>
    <property type="project" value="UniProtKB-UniRule"/>
</dbReference>
<dbReference type="CDD" id="cd01556">
    <property type="entry name" value="EPSP_synthase"/>
    <property type="match status" value="1"/>
</dbReference>
<dbReference type="FunFam" id="3.65.10.10:FF:000005">
    <property type="entry name" value="3-phosphoshikimate 1-carboxyvinyltransferase"/>
    <property type="match status" value="1"/>
</dbReference>
<dbReference type="FunFam" id="3.65.10.10:FF:000006">
    <property type="entry name" value="3-phosphoshikimate 1-carboxyvinyltransferase"/>
    <property type="match status" value="1"/>
</dbReference>
<dbReference type="Gene3D" id="3.65.10.10">
    <property type="entry name" value="Enolpyruvate transferase domain"/>
    <property type="match status" value="2"/>
</dbReference>
<dbReference type="HAMAP" id="MF_00210">
    <property type="entry name" value="EPSP_synth"/>
    <property type="match status" value="1"/>
</dbReference>
<dbReference type="InterPro" id="IPR001986">
    <property type="entry name" value="Enolpyruvate_Tfrase_dom"/>
</dbReference>
<dbReference type="InterPro" id="IPR036968">
    <property type="entry name" value="Enolpyruvate_Tfrase_sf"/>
</dbReference>
<dbReference type="InterPro" id="IPR006264">
    <property type="entry name" value="EPSP_synthase"/>
</dbReference>
<dbReference type="InterPro" id="IPR023193">
    <property type="entry name" value="EPSP_synthase_CS"/>
</dbReference>
<dbReference type="InterPro" id="IPR013792">
    <property type="entry name" value="RNA3'P_cycl/enolpyr_Trfase_a/b"/>
</dbReference>
<dbReference type="NCBIfam" id="TIGR01356">
    <property type="entry name" value="aroA"/>
    <property type="match status" value="1"/>
</dbReference>
<dbReference type="PANTHER" id="PTHR21090">
    <property type="entry name" value="AROM/DEHYDROQUINATE SYNTHASE"/>
    <property type="match status" value="1"/>
</dbReference>
<dbReference type="PANTHER" id="PTHR21090:SF5">
    <property type="entry name" value="PENTAFUNCTIONAL AROM POLYPEPTIDE"/>
    <property type="match status" value="1"/>
</dbReference>
<dbReference type="Pfam" id="PF00275">
    <property type="entry name" value="EPSP_synthase"/>
    <property type="match status" value="1"/>
</dbReference>
<dbReference type="PIRSF" id="PIRSF000505">
    <property type="entry name" value="EPSPS"/>
    <property type="match status" value="1"/>
</dbReference>
<dbReference type="SUPFAM" id="SSF55205">
    <property type="entry name" value="EPT/RTPC-like"/>
    <property type="match status" value="1"/>
</dbReference>
<dbReference type="PROSITE" id="PS00104">
    <property type="entry name" value="EPSP_SYNTHASE_1"/>
    <property type="match status" value="1"/>
</dbReference>
<dbReference type="PROSITE" id="PS00885">
    <property type="entry name" value="EPSP_SYNTHASE_2"/>
    <property type="match status" value="1"/>
</dbReference>
<sequence length="435" mass="45576">MTEITLTAPKRLRGVIQVPGDKSISHRSVLLNAIATGSAHITNFLPGADCLSSVACVRSLGVTVEQPHERELIIHGVGLGGLRESTDVLDCGNSGTTLRLLAGILSGQPFFSVLSGDSSLRSRPQRRVVGPLRAMGAQIDGRADGDRAPLAIRGSTLRGGQYELTIASAQVKSALLLAALYADGPLTLGGRIDSRDHTERMLAAMGVEITVSPDRITLHPPTAATAPVALSLRVPGDPSSAAFWWVAAAIHPDAELVTPGVCLNPTRTGALDVLRAMGAEIEIMNERLEGSELVGDVVVRSSVLRGTTIAGSLIPRLIDEIPVLAVAAACADGETVIRDAQELRAKETDRITTVAAGLSALGVTVEPTIDGMVITGKPDQLTGATLHSYHDHRLAMAWAVAALVARGETTIVEPAAVVISYPDFWQTLAAIQEDV</sequence>
<keyword id="KW-0028">Amino-acid biosynthesis</keyword>
<keyword id="KW-0057">Aromatic amino acid biosynthesis</keyword>
<keyword id="KW-0963">Cytoplasm</keyword>
<keyword id="KW-0808">Transferase</keyword>
<reference key="1">
    <citation type="submission" date="2008-12" db="EMBL/GenBank/DDBJ databases">
        <title>Complete sequence of Chloroflexus aggregans DSM 9485.</title>
        <authorList>
            <consortium name="US DOE Joint Genome Institute"/>
            <person name="Lucas S."/>
            <person name="Copeland A."/>
            <person name="Lapidus A."/>
            <person name="Glavina del Rio T."/>
            <person name="Dalin E."/>
            <person name="Tice H."/>
            <person name="Pitluck S."/>
            <person name="Foster B."/>
            <person name="Larimer F."/>
            <person name="Land M."/>
            <person name="Hauser L."/>
            <person name="Kyrpides N."/>
            <person name="Mikhailova N."/>
            <person name="Bryant D.A."/>
            <person name="Richardson P."/>
        </authorList>
    </citation>
    <scope>NUCLEOTIDE SEQUENCE [LARGE SCALE GENOMIC DNA]</scope>
    <source>
        <strain>MD-66 / DSM 9485</strain>
    </source>
</reference>
<organism>
    <name type="scientific">Chloroflexus aggregans (strain MD-66 / DSM 9485)</name>
    <dbReference type="NCBI Taxonomy" id="326427"/>
    <lineage>
        <taxon>Bacteria</taxon>
        <taxon>Bacillati</taxon>
        <taxon>Chloroflexota</taxon>
        <taxon>Chloroflexia</taxon>
        <taxon>Chloroflexales</taxon>
        <taxon>Chloroflexineae</taxon>
        <taxon>Chloroflexaceae</taxon>
        <taxon>Chloroflexus</taxon>
    </lineage>
</organism>
<feature type="chain" id="PRO_1000124677" description="3-phosphoshikimate 1-carboxyvinyltransferase">
    <location>
        <begin position="1"/>
        <end position="435"/>
    </location>
</feature>
<feature type="active site" description="Proton acceptor" evidence="1">
    <location>
        <position position="319"/>
    </location>
</feature>
<feature type="binding site" evidence="1">
    <location>
        <position position="22"/>
    </location>
    <ligand>
        <name>3-phosphoshikimate</name>
        <dbReference type="ChEBI" id="CHEBI:145989"/>
    </ligand>
</feature>
<feature type="binding site" evidence="1">
    <location>
        <position position="22"/>
    </location>
    <ligand>
        <name>phosphoenolpyruvate</name>
        <dbReference type="ChEBI" id="CHEBI:58702"/>
    </ligand>
</feature>
<feature type="binding site" evidence="1">
    <location>
        <position position="23"/>
    </location>
    <ligand>
        <name>3-phosphoshikimate</name>
        <dbReference type="ChEBI" id="CHEBI:145989"/>
    </ligand>
</feature>
<feature type="binding site" evidence="1">
    <location>
        <position position="27"/>
    </location>
    <ligand>
        <name>3-phosphoshikimate</name>
        <dbReference type="ChEBI" id="CHEBI:145989"/>
    </ligand>
</feature>
<feature type="binding site" evidence="1">
    <location>
        <position position="95"/>
    </location>
    <ligand>
        <name>phosphoenolpyruvate</name>
        <dbReference type="ChEBI" id="CHEBI:58702"/>
    </ligand>
</feature>
<feature type="binding site" evidence="1">
    <location>
        <position position="123"/>
    </location>
    <ligand>
        <name>phosphoenolpyruvate</name>
        <dbReference type="ChEBI" id="CHEBI:58702"/>
    </ligand>
</feature>
<feature type="binding site" evidence="1">
    <location>
        <position position="168"/>
    </location>
    <ligand>
        <name>3-phosphoshikimate</name>
        <dbReference type="ChEBI" id="CHEBI:145989"/>
    </ligand>
</feature>
<feature type="binding site" evidence="1">
    <location>
        <position position="170"/>
    </location>
    <ligand>
        <name>3-phosphoshikimate</name>
        <dbReference type="ChEBI" id="CHEBI:145989"/>
    </ligand>
</feature>
<feature type="binding site" evidence="1">
    <location>
        <position position="170"/>
    </location>
    <ligand>
        <name>phosphoenolpyruvate</name>
        <dbReference type="ChEBI" id="CHEBI:58702"/>
    </ligand>
</feature>
<feature type="binding site" evidence="1">
    <location>
        <position position="319"/>
    </location>
    <ligand>
        <name>3-phosphoshikimate</name>
        <dbReference type="ChEBI" id="CHEBI:145989"/>
    </ligand>
</feature>
<feature type="binding site" evidence="1">
    <location>
        <position position="346"/>
    </location>
    <ligand>
        <name>3-phosphoshikimate</name>
        <dbReference type="ChEBI" id="CHEBI:145989"/>
    </ligand>
</feature>
<feature type="binding site" evidence="1">
    <location>
        <position position="350"/>
    </location>
    <ligand>
        <name>phosphoenolpyruvate</name>
        <dbReference type="ChEBI" id="CHEBI:58702"/>
    </ligand>
</feature>
<feature type="binding site" evidence="1">
    <location>
        <position position="393"/>
    </location>
    <ligand>
        <name>phosphoenolpyruvate</name>
        <dbReference type="ChEBI" id="CHEBI:58702"/>
    </ligand>
</feature>
<protein>
    <recommendedName>
        <fullName evidence="1">3-phosphoshikimate 1-carboxyvinyltransferase</fullName>
        <ecNumber evidence="1">2.5.1.19</ecNumber>
    </recommendedName>
    <alternativeName>
        <fullName evidence="1">5-enolpyruvylshikimate-3-phosphate synthase</fullName>
        <shortName evidence="1">EPSP synthase</shortName>
        <shortName evidence="1">EPSPS</shortName>
    </alternativeName>
</protein>
<comment type="function">
    <text evidence="1">Catalyzes the transfer of the enolpyruvyl moiety of phosphoenolpyruvate (PEP) to the 5-hydroxyl of shikimate-3-phosphate (S3P) to produce enolpyruvyl shikimate-3-phosphate and inorganic phosphate.</text>
</comment>
<comment type="catalytic activity">
    <reaction evidence="1">
        <text>3-phosphoshikimate + phosphoenolpyruvate = 5-O-(1-carboxyvinyl)-3-phosphoshikimate + phosphate</text>
        <dbReference type="Rhea" id="RHEA:21256"/>
        <dbReference type="ChEBI" id="CHEBI:43474"/>
        <dbReference type="ChEBI" id="CHEBI:57701"/>
        <dbReference type="ChEBI" id="CHEBI:58702"/>
        <dbReference type="ChEBI" id="CHEBI:145989"/>
        <dbReference type="EC" id="2.5.1.19"/>
    </reaction>
    <physiologicalReaction direction="left-to-right" evidence="1">
        <dbReference type="Rhea" id="RHEA:21257"/>
    </physiologicalReaction>
</comment>
<comment type="pathway">
    <text evidence="1">Metabolic intermediate biosynthesis; chorismate biosynthesis; chorismate from D-erythrose 4-phosphate and phosphoenolpyruvate: step 6/7.</text>
</comment>
<comment type="subunit">
    <text evidence="1">Monomer.</text>
</comment>
<comment type="subcellular location">
    <subcellularLocation>
        <location evidence="1">Cytoplasm</location>
    </subcellularLocation>
</comment>
<comment type="similarity">
    <text evidence="1">Belongs to the EPSP synthase family.</text>
</comment>
<gene>
    <name evidence="1" type="primary">aroA</name>
    <name type="ordered locus">Cagg_0117</name>
</gene>
<name>AROA_CHLAD</name>
<proteinExistence type="inferred from homology"/>
<evidence type="ECO:0000255" key="1">
    <source>
        <dbReference type="HAMAP-Rule" id="MF_00210"/>
    </source>
</evidence>